<protein>
    <recommendedName>
        <fullName evidence="1">Glycerol-3-phosphate dehydrogenase [NAD(P)+]</fullName>
        <ecNumber evidence="1">1.1.1.94</ecNumber>
    </recommendedName>
    <alternativeName>
        <fullName evidence="1">NAD(P)(+)-dependent glycerol-3-phosphate dehydrogenase</fullName>
    </alternativeName>
    <alternativeName>
        <fullName evidence="1">NAD(P)H-dependent dihydroxyacetone-phosphate reductase</fullName>
    </alternativeName>
</protein>
<name>GPDA_ECO27</name>
<dbReference type="EC" id="1.1.1.94" evidence="1"/>
<dbReference type="EMBL" id="FM180568">
    <property type="protein sequence ID" value="CAS11405.1"/>
    <property type="molecule type" value="Genomic_DNA"/>
</dbReference>
<dbReference type="RefSeq" id="WP_001076194.1">
    <property type="nucleotide sequence ID" value="NC_011601.1"/>
</dbReference>
<dbReference type="SMR" id="B7ULG4"/>
<dbReference type="GeneID" id="93778322"/>
<dbReference type="KEGG" id="ecg:E2348C_3857"/>
<dbReference type="HOGENOM" id="CLU_033449_0_2_6"/>
<dbReference type="UniPathway" id="UPA00940"/>
<dbReference type="Proteomes" id="UP000008205">
    <property type="component" value="Chromosome"/>
</dbReference>
<dbReference type="GO" id="GO:0005829">
    <property type="term" value="C:cytosol"/>
    <property type="evidence" value="ECO:0007669"/>
    <property type="project" value="TreeGrafter"/>
</dbReference>
<dbReference type="GO" id="GO:0047952">
    <property type="term" value="F:glycerol-3-phosphate dehydrogenase [NAD(P)+] activity"/>
    <property type="evidence" value="ECO:0007669"/>
    <property type="project" value="UniProtKB-UniRule"/>
</dbReference>
<dbReference type="GO" id="GO:0051287">
    <property type="term" value="F:NAD binding"/>
    <property type="evidence" value="ECO:0007669"/>
    <property type="project" value="InterPro"/>
</dbReference>
<dbReference type="GO" id="GO:0005975">
    <property type="term" value="P:carbohydrate metabolic process"/>
    <property type="evidence" value="ECO:0007669"/>
    <property type="project" value="InterPro"/>
</dbReference>
<dbReference type="GO" id="GO:0046167">
    <property type="term" value="P:glycerol-3-phosphate biosynthetic process"/>
    <property type="evidence" value="ECO:0007669"/>
    <property type="project" value="UniProtKB-UniRule"/>
</dbReference>
<dbReference type="GO" id="GO:0046168">
    <property type="term" value="P:glycerol-3-phosphate catabolic process"/>
    <property type="evidence" value="ECO:0007669"/>
    <property type="project" value="InterPro"/>
</dbReference>
<dbReference type="GO" id="GO:0046474">
    <property type="term" value="P:glycerophospholipid biosynthetic process"/>
    <property type="evidence" value="ECO:0007669"/>
    <property type="project" value="TreeGrafter"/>
</dbReference>
<dbReference type="FunFam" id="1.10.1040.10:FF:000001">
    <property type="entry name" value="Glycerol-3-phosphate dehydrogenase [NAD(P)+]"/>
    <property type="match status" value="1"/>
</dbReference>
<dbReference type="FunFam" id="3.40.50.720:FF:000019">
    <property type="entry name" value="Glycerol-3-phosphate dehydrogenase [NAD(P)+]"/>
    <property type="match status" value="1"/>
</dbReference>
<dbReference type="Gene3D" id="1.10.1040.10">
    <property type="entry name" value="N-(1-d-carboxylethyl)-l-norvaline Dehydrogenase, domain 2"/>
    <property type="match status" value="1"/>
</dbReference>
<dbReference type="Gene3D" id="3.40.50.720">
    <property type="entry name" value="NAD(P)-binding Rossmann-like Domain"/>
    <property type="match status" value="1"/>
</dbReference>
<dbReference type="HAMAP" id="MF_00394">
    <property type="entry name" value="NAD_Glyc3P_dehydrog"/>
    <property type="match status" value="1"/>
</dbReference>
<dbReference type="InterPro" id="IPR008927">
    <property type="entry name" value="6-PGluconate_DH-like_C_sf"/>
</dbReference>
<dbReference type="InterPro" id="IPR013328">
    <property type="entry name" value="6PGD_dom2"/>
</dbReference>
<dbReference type="InterPro" id="IPR006168">
    <property type="entry name" value="G3P_DH_NAD-dep"/>
</dbReference>
<dbReference type="InterPro" id="IPR006109">
    <property type="entry name" value="G3P_DH_NAD-dep_C"/>
</dbReference>
<dbReference type="InterPro" id="IPR011128">
    <property type="entry name" value="G3P_DH_NAD-dep_N"/>
</dbReference>
<dbReference type="InterPro" id="IPR036291">
    <property type="entry name" value="NAD(P)-bd_dom_sf"/>
</dbReference>
<dbReference type="NCBIfam" id="NF000939">
    <property type="entry name" value="PRK00094.1-1"/>
    <property type="match status" value="1"/>
</dbReference>
<dbReference type="NCBIfam" id="NF000940">
    <property type="entry name" value="PRK00094.1-2"/>
    <property type="match status" value="1"/>
</dbReference>
<dbReference type="NCBIfam" id="NF000942">
    <property type="entry name" value="PRK00094.1-4"/>
    <property type="match status" value="1"/>
</dbReference>
<dbReference type="PANTHER" id="PTHR11728">
    <property type="entry name" value="GLYCEROL-3-PHOSPHATE DEHYDROGENASE"/>
    <property type="match status" value="1"/>
</dbReference>
<dbReference type="PANTHER" id="PTHR11728:SF1">
    <property type="entry name" value="GLYCEROL-3-PHOSPHATE DEHYDROGENASE [NAD(+)] 2, CHLOROPLASTIC"/>
    <property type="match status" value="1"/>
</dbReference>
<dbReference type="Pfam" id="PF07479">
    <property type="entry name" value="NAD_Gly3P_dh_C"/>
    <property type="match status" value="1"/>
</dbReference>
<dbReference type="Pfam" id="PF01210">
    <property type="entry name" value="NAD_Gly3P_dh_N"/>
    <property type="match status" value="1"/>
</dbReference>
<dbReference type="PIRSF" id="PIRSF000114">
    <property type="entry name" value="Glycerol-3-P_dh"/>
    <property type="match status" value="1"/>
</dbReference>
<dbReference type="PRINTS" id="PR00077">
    <property type="entry name" value="GPDHDRGNASE"/>
</dbReference>
<dbReference type="SUPFAM" id="SSF48179">
    <property type="entry name" value="6-phosphogluconate dehydrogenase C-terminal domain-like"/>
    <property type="match status" value="1"/>
</dbReference>
<dbReference type="SUPFAM" id="SSF51735">
    <property type="entry name" value="NAD(P)-binding Rossmann-fold domains"/>
    <property type="match status" value="1"/>
</dbReference>
<dbReference type="PROSITE" id="PS00957">
    <property type="entry name" value="NAD_G3PDH"/>
    <property type="match status" value="1"/>
</dbReference>
<proteinExistence type="inferred from homology"/>
<organism>
    <name type="scientific">Escherichia coli O127:H6 (strain E2348/69 / EPEC)</name>
    <dbReference type="NCBI Taxonomy" id="574521"/>
    <lineage>
        <taxon>Bacteria</taxon>
        <taxon>Pseudomonadati</taxon>
        <taxon>Pseudomonadota</taxon>
        <taxon>Gammaproteobacteria</taxon>
        <taxon>Enterobacterales</taxon>
        <taxon>Enterobacteriaceae</taxon>
        <taxon>Escherichia</taxon>
    </lineage>
</organism>
<keyword id="KW-0963">Cytoplasm</keyword>
<keyword id="KW-0444">Lipid biosynthesis</keyword>
<keyword id="KW-0443">Lipid metabolism</keyword>
<keyword id="KW-0520">NAD</keyword>
<keyword id="KW-0521">NADP</keyword>
<keyword id="KW-0547">Nucleotide-binding</keyword>
<keyword id="KW-0560">Oxidoreductase</keyword>
<keyword id="KW-0594">Phospholipid biosynthesis</keyword>
<keyword id="KW-1208">Phospholipid metabolism</keyword>
<keyword id="KW-1185">Reference proteome</keyword>
<sequence>MNQRNASMTVIGAGSYGTALAITLARNGHEVVLWGHDPEHIATLERDRCNAAFLPDVPFPDTLHLESDLATALAASRNILVVVPSHVFGEVLRQIKPLMRPDARLVWATKGLEAETGRLLQDVAREALGDQIPLAVISGPTFAKELAAGLPTAISLASTDQTFADDLQQLLHCGKSFRVYSNPDFIGVQLGGAVKNVIAIGAGMSDGIGFGANARTALITRGLAEMSRLGAALGADPATFMGMAGLGDLVLTCTDNQSRNRRFGMMLGQGMDVQSAQEKIGQVVEGYRNTKEVRELAHRFGVEMPITEEIYQVLYCGKNAREAALTLLGRARKDERSSH</sequence>
<comment type="function">
    <text evidence="1">Catalyzes the reduction of the glycolytic intermediate dihydroxyacetone phosphate (DHAP) to sn-glycerol 3-phosphate (G3P), the key precursor for phospholipid synthesis.</text>
</comment>
<comment type="catalytic activity">
    <reaction evidence="1">
        <text>sn-glycerol 3-phosphate + NAD(+) = dihydroxyacetone phosphate + NADH + H(+)</text>
        <dbReference type="Rhea" id="RHEA:11092"/>
        <dbReference type="ChEBI" id="CHEBI:15378"/>
        <dbReference type="ChEBI" id="CHEBI:57540"/>
        <dbReference type="ChEBI" id="CHEBI:57597"/>
        <dbReference type="ChEBI" id="CHEBI:57642"/>
        <dbReference type="ChEBI" id="CHEBI:57945"/>
        <dbReference type="EC" id="1.1.1.94"/>
    </reaction>
    <physiologicalReaction direction="right-to-left" evidence="1">
        <dbReference type="Rhea" id="RHEA:11094"/>
    </physiologicalReaction>
</comment>
<comment type="catalytic activity">
    <reaction evidence="1">
        <text>sn-glycerol 3-phosphate + NADP(+) = dihydroxyacetone phosphate + NADPH + H(+)</text>
        <dbReference type="Rhea" id="RHEA:11096"/>
        <dbReference type="ChEBI" id="CHEBI:15378"/>
        <dbReference type="ChEBI" id="CHEBI:57597"/>
        <dbReference type="ChEBI" id="CHEBI:57642"/>
        <dbReference type="ChEBI" id="CHEBI:57783"/>
        <dbReference type="ChEBI" id="CHEBI:58349"/>
        <dbReference type="EC" id="1.1.1.94"/>
    </reaction>
    <physiologicalReaction direction="right-to-left" evidence="1">
        <dbReference type="Rhea" id="RHEA:11098"/>
    </physiologicalReaction>
</comment>
<comment type="pathway">
    <text evidence="1">Membrane lipid metabolism; glycerophospholipid metabolism.</text>
</comment>
<comment type="subcellular location">
    <subcellularLocation>
        <location evidence="1">Cytoplasm</location>
    </subcellularLocation>
</comment>
<comment type="similarity">
    <text evidence="1">Belongs to the NAD-dependent glycerol-3-phosphate dehydrogenase family.</text>
</comment>
<accession>B7ULG4</accession>
<gene>
    <name evidence="1" type="primary">gpsA</name>
    <name type="ordered locus">E2348C_3857</name>
</gene>
<reference key="1">
    <citation type="journal article" date="2009" name="J. Bacteriol.">
        <title>Complete genome sequence and comparative genome analysis of enteropathogenic Escherichia coli O127:H6 strain E2348/69.</title>
        <authorList>
            <person name="Iguchi A."/>
            <person name="Thomson N.R."/>
            <person name="Ogura Y."/>
            <person name="Saunders D."/>
            <person name="Ooka T."/>
            <person name="Henderson I.R."/>
            <person name="Harris D."/>
            <person name="Asadulghani M."/>
            <person name="Kurokawa K."/>
            <person name="Dean P."/>
            <person name="Kenny B."/>
            <person name="Quail M.A."/>
            <person name="Thurston S."/>
            <person name="Dougan G."/>
            <person name="Hayashi T."/>
            <person name="Parkhill J."/>
            <person name="Frankel G."/>
        </authorList>
    </citation>
    <scope>NUCLEOTIDE SEQUENCE [LARGE SCALE GENOMIC DNA]</scope>
    <source>
        <strain>E2348/69 / EPEC</strain>
    </source>
</reference>
<evidence type="ECO:0000255" key="1">
    <source>
        <dbReference type="HAMAP-Rule" id="MF_00394"/>
    </source>
</evidence>
<feature type="chain" id="PRO_1000190143" description="Glycerol-3-phosphate dehydrogenase [NAD(P)+]">
    <location>
        <begin position="1"/>
        <end position="339"/>
    </location>
</feature>
<feature type="active site" description="Proton acceptor" evidence="1">
    <location>
        <position position="195"/>
    </location>
</feature>
<feature type="binding site" evidence="1">
    <location>
        <position position="15"/>
    </location>
    <ligand>
        <name>NADPH</name>
        <dbReference type="ChEBI" id="CHEBI:57783"/>
    </ligand>
</feature>
<feature type="binding site" evidence="1">
    <location>
        <position position="16"/>
    </location>
    <ligand>
        <name>NADPH</name>
        <dbReference type="ChEBI" id="CHEBI:57783"/>
    </ligand>
</feature>
<feature type="binding site" evidence="1">
    <location>
        <position position="36"/>
    </location>
    <ligand>
        <name>NADPH</name>
        <dbReference type="ChEBI" id="CHEBI:57783"/>
    </ligand>
</feature>
<feature type="binding site" evidence="1">
    <location>
        <position position="110"/>
    </location>
    <ligand>
        <name>NADPH</name>
        <dbReference type="ChEBI" id="CHEBI:57783"/>
    </ligand>
</feature>
<feature type="binding site" evidence="1">
    <location>
        <position position="110"/>
    </location>
    <ligand>
        <name>sn-glycerol 3-phosphate</name>
        <dbReference type="ChEBI" id="CHEBI:57597"/>
    </ligand>
</feature>
<feature type="binding site" evidence="1">
    <location>
        <position position="139"/>
    </location>
    <ligand>
        <name>sn-glycerol 3-phosphate</name>
        <dbReference type="ChEBI" id="CHEBI:57597"/>
    </ligand>
</feature>
<feature type="binding site" evidence="1">
    <location>
        <position position="141"/>
    </location>
    <ligand>
        <name>sn-glycerol 3-phosphate</name>
        <dbReference type="ChEBI" id="CHEBI:57597"/>
    </ligand>
</feature>
<feature type="binding site" evidence="1">
    <location>
        <position position="143"/>
    </location>
    <ligand>
        <name>NADPH</name>
        <dbReference type="ChEBI" id="CHEBI:57783"/>
    </ligand>
</feature>
<feature type="binding site" evidence="1">
    <location>
        <position position="195"/>
    </location>
    <ligand>
        <name>sn-glycerol 3-phosphate</name>
        <dbReference type="ChEBI" id="CHEBI:57597"/>
    </ligand>
</feature>
<feature type="binding site" evidence="1">
    <location>
        <position position="248"/>
    </location>
    <ligand>
        <name>sn-glycerol 3-phosphate</name>
        <dbReference type="ChEBI" id="CHEBI:57597"/>
    </ligand>
</feature>
<feature type="binding site" evidence="1">
    <location>
        <position position="258"/>
    </location>
    <ligand>
        <name>sn-glycerol 3-phosphate</name>
        <dbReference type="ChEBI" id="CHEBI:57597"/>
    </ligand>
</feature>
<feature type="binding site" evidence="1">
    <location>
        <position position="259"/>
    </location>
    <ligand>
        <name>NADPH</name>
        <dbReference type="ChEBI" id="CHEBI:57783"/>
    </ligand>
</feature>
<feature type="binding site" evidence="1">
    <location>
        <position position="259"/>
    </location>
    <ligand>
        <name>sn-glycerol 3-phosphate</name>
        <dbReference type="ChEBI" id="CHEBI:57597"/>
    </ligand>
</feature>
<feature type="binding site" evidence="1">
    <location>
        <position position="260"/>
    </location>
    <ligand>
        <name>sn-glycerol 3-phosphate</name>
        <dbReference type="ChEBI" id="CHEBI:57597"/>
    </ligand>
</feature>
<feature type="binding site" evidence="1">
    <location>
        <position position="283"/>
    </location>
    <ligand>
        <name>NADPH</name>
        <dbReference type="ChEBI" id="CHEBI:57783"/>
    </ligand>
</feature>
<feature type="binding site" evidence="1">
    <location>
        <position position="285"/>
    </location>
    <ligand>
        <name>NADPH</name>
        <dbReference type="ChEBI" id="CHEBI:57783"/>
    </ligand>
</feature>